<keyword id="KW-0143">Chaperone</keyword>
<keyword id="KW-0963">Cytoplasm</keyword>
<keyword id="KW-0533">Nickel</keyword>
<keyword id="KW-0996">Nickel insertion</keyword>
<evidence type="ECO:0000255" key="1">
    <source>
        <dbReference type="HAMAP-Rule" id="MF_00822"/>
    </source>
</evidence>
<organism>
    <name type="scientific">Staphylococcus aureus (strain bovine RF122 / ET3-1)</name>
    <dbReference type="NCBI Taxonomy" id="273036"/>
    <lineage>
        <taxon>Bacteria</taxon>
        <taxon>Bacillati</taxon>
        <taxon>Bacillota</taxon>
        <taxon>Bacilli</taxon>
        <taxon>Bacillales</taxon>
        <taxon>Staphylococcaceae</taxon>
        <taxon>Staphylococcus</taxon>
    </lineage>
</organism>
<sequence>MIVEEIQGNIANLSNSEKQKHVEKVYLENSDLVKRIQRVVTDHGTEIGIRLKQPIDLQYGDILYADDHNMIIVDVNSEDLLVIQPRTLQEMGDIAHQLGNRHLPAQFTETEMLVQYDYLVEDLLKSLGIPYVREDRKVNKAFRHIGHSHD</sequence>
<comment type="function">
    <text evidence="1">Involved in urease metallocenter assembly. Binds nickel. Probably functions as a nickel donor during metallocenter assembly.</text>
</comment>
<comment type="subcellular location">
    <subcellularLocation>
        <location evidence="1">Cytoplasm</location>
    </subcellularLocation>
</comment>
<comment type="similarity">
    <text evidence="1">Belongs to the UreE family.</text>
</comment>
<name>UREE_STAAB</name>
<dbReference type="EMBL" id="AJ938182">
    <property type="protein sequence ID" value="CAI81852.1"/>
    <property type="molecule type" value="Genomic_DNA"/>
</dbReference>
<dbReference type="RefSeq" id="WP_000634589.1">
    <property type="nucleotide sequence ID" value="NC_007622.1"/>
</dbReference>
<dbReference type="SMR" id="Q2YYQ5"/>
<dbReference type="KEGG" id="sab:SAB2163"/>
<dbReference type="HOGENOM" id="CLU_093757_3_1_9"/>
<dbReference type="GO" id="GO:0005737">
    <property type="term" value="C:cytoplasm"/>
    <property type="evidence" value="ECO:0007669"/>
    <property type="project" value="UniProtKB-SubCell"/>
</dbReference>
<dbReference type="GO" id="GO:0016151">
    <property type="term" value="F:nickel cation binding"/>
    <property type="evidence" value="ECO:0007669"/>
    <property type="project" value="UniProtKB-UniRule"/>
</dbReference>
<dbReference type="GO" id="GO:0051082">
    <property type="term" value="F:unfolded protein binding"/>
    <property type="evidence" value="ECO:0007669"/>
    <property type="project" value="UniProtKB-UniRule"/>
</dbReference>
<dbReference type="GO" id="GO:0006457">
    <property type="term" value="P:protein folding"/>
    <property type="evidence" value="ECO:0007669"/>
    <property type="project" value="InterPro"/>
</dbReference>
<dbReference type="GO" id="GO:0065003">
    <property type="term" value="P:protein-containing complex assembly"/>
    <property type="evidence" value="ECO:0007669"/>
    <property type="project" value="InterPro"/>
</dbReference>
<dbReference type="GO" id="GO:0019627">
    <property type="term" value="P:urea metabolic process"/>
    <property type="evidence" value="ECO:0007669"/>
    <property type="project" value="InterPro"/>
</dbReference>
<dbReference type="CDD" id="cd00571">
    <property type="entry name" value="UreE"/>
    <property type="match status" value="1"/>
</dbReference>
<dbReference type="Gene3D" id="2.60.260.20">
    <property type="entry name" value="Urease metallochaperone UreE, N-terminal domain"/>
    <property type="match status" value="1"/>
</dbReference>
<dbReference type="Gene3D" id="3.30.70.790">
    <property type="entry name" value="UreE, C-terminal domain"/>
    <property type="match status" value="1"/>
</dbReference>
<dbReference type="HAMAP" id="MF_00822">
    <property type="entry name" value="UreE"/>
    <property type="match status" value="1"/>
</dbReference>
<dbReference type="InterPro" id="IPR012406">
    <property type="entry name" value="UreE"/>
</dbReference>
<dbReference type="InterPro" id="IPR007864">
    <property type="entry name" value="UreE_C_dom"/>
</dbReference>
<dbReference type="InterPro" id="IPR004029">
    <property type="entry name" value="UreE_N"/>
</dbReference>
<dbReference type="InterPro" id="IPR036118">
    <property type="entry name" value="UreE_N_sf"/>
</dbReference>
<dbReference type="NCBIfam" id="NF009755">
    <property type="entry name" value="PRK13261.2-1"/>
    <property type="match status" value="1"/>
</dbReference>
<dbReference type="Pfam" id="PF05194">
    <property type="entry name" value="UreE_C"/>
    <property type="match status" value="1"/>
</dbReference>
<dbReference type="Pfam" id="PF02814">
    <property type="entry name" value="UreE_N"/>
    <property type="match status" value="1"/>
</dbReference>
<dbReference type="PIRSF" id="PIRSF036402">
    <property type="entry name" value="Ureas_acces_UreE"/>
    <property type="match status" value="1"/>
</dbReference>
<dbReference type="SMART" id="SM00988">
    <property type="entry name" value="UreE_N"/>
    <property type="match status" value="1"/>
</dbReference>
<dbReference type="SUPFAM" id="SSF69737">
    <property type="entry name" value="Urease metallochaperone UreE, C-terminal domain"/>
    <property type="match status" value="1"/>
</dbReference>
<dbReference type="SUPFAM" id="SSF69287">
    <property type="entry name" value="Urease metallochaperone UreE, N-terminal domain"/>
    <property type="match status" value="1"/>
</dbReference>
<proteinExistence type="inferred from homology"/>
<gene>
    <name evidence="1" type="primary">ureE</name>
    <name type="ordered locus">SAB2163</name>
</gene>
<reference key="1">
    <citation type="journal article" date="2007" name="PLoS ONE">
        <title>Molecular correlates of host specialization in Staphylococcus aureus.</title>
        <authorList>
            <person name="Herron-Olson L."/>
            <person name="Fitzgerald J.R."/>
            <person name="Musser J.M."/>
            <person name="Kapur V."/>
        </authorList>
    </citation>
    <scope>NUCLEOTIDE SEQUENCE [LARGE SCALE GENOMIC DNA]</scope>
    <source>
        <strain>bovine RF122 / ET3-1</strain>
    </source>
</reference>
<protein>
    <recommendedName>
        <fullName evidence="1">Urease accessory protein UreE</fullName>
    </recommendedName>
</protein>
<accession>Q2YYQ5</accession>
<feature type="chain" id="PRO_1000062564" description="Urease accessory protein UreE">
    <location>
        <begin position="1"/>
        <end position="150"/>
    </location>
</feature>